<protein>
    <recommendedName>
        <fullName evidence="1">Fibrillarin-like rRNA/tRNA 2'-O-methyltransferase</fullName>
        <ecNumber evidence="1">2.1.1.-</ecNumber>
    </recommendedName>
</protein>
<evidence type="ECO:0000255" key="1">
    <source>
        <dbReference type="HAMAP-Rule" id="MF_00351"/>
    </source>
</evidence>
<accession>Q8TXU9</accession>
<comment type="function">
    <text evidence="1">Involved in pre-rRNA and tRNA processing. Utilizes the methyl donor S-adenosyl-L-methionine to catalyze the site-specific 2'-hydroxyl methylation of ribose moieties in rRNA and tRNA. Site specificity is provided by a guide RNA that base pairs with the substrate. Methylation occurs at a characteristic distance from the sequence involved in base pairing with the guide RNA.</text>
</comment>
<comment type="subunit">
    <text evidence="1">Interacts with nop5. Component of box C/D small ribonucleoprotein (sRNP) particles that contain rpl7ae, FlpA and nop5, plus a guide RNA.</text>
</comment>
<comment type="similarity">
    <text evidence="1">Belongs to the methyltransferase superfamily. Fibrillarin family.</text>
</comment>
<proteinExistence type="inferred from homology"/>
<reference key="1">
    <citation type="journal article" date="2002" name="Proc. Natl. Acad. Sci. U.S.A.">
        <title>The complete genome of hyperthermophile Methanopyrus kandleri AV19 and monophyly of archaeal methanogens.</title>
        <authorList>
            <person name="Slesarev A.I."/>
            <person name="Mezhevaya K.V."/>
            <person name="Makarova K.S."/>
            <person name="Polushin N.N."/>
            <person name="Shcherbinina O.V."/>
            <person name="Shakhova V.V."/>
            <person name="Belova G.I."/>
            <person name="Aravind L."/>
            <person name="Natale D.A."/>
            <person name="Rogozin I.B."/>
            <person name="Tatusov R.L."/>
            <person name="Wolf Y.I."/>
            <person name="Stetter K.O."/>
            <person name="Malykh A.G."/>
            <person name="Koonin E.V."/>
            <person name="Kozyavkin S.A."/>
        </authorList>
    </citation>
    <scope>NUCLEOTIDE SEQUENCE [LARGE SCALE GENOMIC DNA]</scope>
    <source>
        <strain>AV19 / DSM 6324 / JCM 9639 / NBRC 100938</strain>
    </source>
</reference>
<sequence length="232" mass="26394">MVEIEIEPHEEFEGVYWAIFEDGRKKPATENLVPGHQVYGERLVEYDGKEYRVWEPRRSKLAAMIMNGMEYFPFEEGSKVLYLGAAAGTTPSHVSDIIKESGVEYCVEFASRMMQELIPVCEKRPNMIPILGDATKPHGYAPLVEQVDVIYQDIAQPKQAEVVADNAEAFLRPGGYVIVAIKARSIDVTKEPEEVFEDEERKLEERGFEVLEVIDLEPYERDHVGIVAEYHG</sequence>
<keyword id="KW-0489">Methyltransferase</keyword>
<keyword id="KW-1185">Reference proteome</keyword>
<keyword id="KW-0694">RNA-binding</keyword>
<keyword id="KW-0698">rRNA processing</keyword>
<keyword id="KW-0808">Transferase</keyword>
<keyword id="KW-0819">tRNA processing</keyword>
<organism>
    <name type="scientific">Methanopyrus kandleri (strain AV19 / DSM 6324 / JCM 9639 / NBRC 100938)</name>
    <dbReference type="NCBI Taxonomy" id="190192"/>
    <lineage>
        <taxon>Archaea</taxon>
        <taxon>Methanobacteriati</taxon>
        <taxon>Methanobacteriota</taxon>
        <taxon>Methanomada group</taxon>
        <taxon>Methanopyri</taxon>
        <taxon>Methanopyrales</taxon>
        <taxon>Methanopyraceae</taxon>
        <taxon>Methanopyrus</taxon>
    </lineage>
</organism>
<feature type="chain" id="PRO_0000148534" description="Fibrillarin-like rRNA/tRNA 2'-O-methyltransferase">
    <location>
        <begin position="1"/>
        <end position="232"/>
    </location>
</feature>
<feature type="binding site" evidence="1">
    <location>
        <begin position="89"/>
        <end position="90"/>
    </location>
    <ligand>
        <name>S-adenosyl-L-methionine</name>
        <dbReference type="ChEBI" id="CHEBI:59789"/>
    </ligand>
</feature>
<feature type="binding site" evidence="1">
    <location>
        <begin position="108"/>
        <end position="109"/>
    </location>
    <ligand>
        <name>S-adenosyl-L-methionine</name>
        <dbReference type="ChEBI" id="CHEBI:59789"/>
    </ligand>
</feature>
<feature type="binding site" evidence="1">
    <location>
        <begin position="133"/>
        <end position="134"/>
    </location>
    <ligand>
        <name>S-adenosyl-L-methionine</name>
        <dbReference type="ChEBI" id="CHEBI:59789"/>
    </ligand>
</feature>
<feature type="binding site" evidence="1">
    <location>
        <begin position="153"/>
        <end position="156"/>
    </location>
    <ligand>
        <name>S-adenosyl-L-methionine</name>
        <dbReference type="ChEBI" id="CHEBI:59789"/>
    </ligand>
</feature>
<dbReference type="EC" id="2.1.1.-" evidence="1"/>
<dbReference type="EMBL" id="AE009439">
    <property type="protein sequence ID" value="AAM01775.1"/>
    <property type="molecule type" value="Genomic_DNA"/>
</dbReference>
<dbReference type="RefSeq" id="WP_011018930.1">
    <property type="nucleotide sequence ID" value="NC_003551.1"/>
</dbReference>
<dbReference type="SMR" id="Q8TXU9"/>
<dbReference type="FunCoup" id="Q8TXU9">
    <property type="interactions" value="124"/>
</dbReference>
<dbReference type="STRING" id="190192.MK0560"/>
<dbReference type="PaxDb" id="190192-MK0560"/>
<dbReference type="EnsemblBacteria" id="AAM01775">
    <property type="protein sequence ID" value="AAM01775"/>
    <property type="gene ID" value="MK0560"/>
</dbReference>
<dbReference type="GeneID" id="1476661"/>
<dbReference type="KEGG" id="mka:MK0560"/>
<dbReference type="PATRIC" id="fig|190192.8.peg.595"/>
<dbReference type="HOGENOM" id="CLU_059055_2_0_2"/>
<dbReference type="InParanoid" id="Q8TXU9"/>
<dbReference type="OrthoDB" id="6244at2157"/>
<dbReference type="Proteomes" id="UP000001826">
    <property type="component" value="Chromosome"/>
</dbReference>
<dbReference type="GO" id="GO:1990259">
    <property type="term" value="F:histone H2AQ104 methyltransferase activity"/>
    <property type="evidence" value="ECO:0007669"/>
    <property type="project" value="TreeGrafter"/>
</dbReference>
<dbReference type="GO" id="GO:0003723">
    <property type="term" value="F:RNA binding"/>
    <property type="evidence" value="ECO:0007669"/>
    <property type="project" value="UniProtKB-UniRule"/>
</dbReference>
<dbReference type="GO" id="GO:0008649">
    <property type="term" value="F:rRNA methyltransferase activity"/>
    <property type="evidence" value="ECO:0007669"/>
    <property type="project" value="TreeGrafter"/>
</dbReference>
<dbReference type="GO" id="GO:0000494">
    <property type="term" value="P:box C/D sno(s)RNA 3'-end processing"/>
    <property type="evidence" value="ECO:0007669"/>
    <property type="project" value="TreeGrafter"/>
</dbReference>
<dbReference type="GO" id="GO:0008033">
    <property type="term" value="P:tRNA processing"/>
    <property type="evidence" value="ECO:0007669"/>
    <property type="project" value="UniProtKB-UniRule"/>
</dbReference>
<dbReference type="FunFam" id="3.30.200.20:FF:000613">
    <property type="entry name" value="Fibrillarin-like rRNA/tRNA 2'-O-methyltransferase"/>
    <property type="match status" value="1"/>
</dbReference>
<dbReference type="Gene3D" id="3.30.200.20">
    <property type="entry name" value="Phosphorylase Kinase, domain 1"/>
    <property type="match status" value="1"/>
</dbReference>
<dbReference type="Gene3D" id="3.40.50.150">
    <property type="entry name" value="Vaccinia Virus protein VP39"/>
    <property type="match status" value="1"/>
</dbReference>
<dbReference type="HAMAP" id="MF_00351">
    <property type="entry name" value="RNA_methyltransf_FlpA"/>
    <property type="match status" value="1"/>
</dbReference>
<dbReference type="InterPro" id="IPR000692">
    <property type="entry name" value="Fibrillarin"/>
</dbReference>
<dbReference type="InterPro" id="IPR020813">
    <property type="entry name" value="Fibrillarin_CS"/>
</dbReference>
<dbReference type="InterPro" id="IPR029063">
    <property type="entry name" value="SAM-dependent_MTases_sf"/>
</dbReference>
<dbReference type="NCBIfam" id="NF003276">
    <property type="entry name" value="PRK04266.1-2"/>
    <property type="match status" value="1"/>
</dbReference>
<dbReference type="NCBIfam" id="NF003277">
    <property type="entry name" value="PRK04266.1-3"/>
    <property type="match status" value="1"/>
</dbReference>
<dbReference type="PANTHER" id="PTHR10335:SF17">
    <property type="entry name" value="FIBRILLARIN"/>
    <property type="match status" value="1"/>
</dbReference>
<dbReference type="PANTHER" id="PTHR10335">
    <property type="entry name" value="RRNA 2-O-METHYLTRANSFERASE FIBRILLARIN"/>
    <property type="match status" value="1"/>
</dbReference>
<dbReference type="Pfam" id="PF01269">
    <property type="entry name" value="Fibrillarin"/>
    <property type="match status" value="1"/>
</dbReference>
<dbReference type="PIRSF" id="PIRSF006540">
    <property type="entry name" value="Nop17p"/>
    <property type="match status" value="1"/>
</dbReference>
<dbReference type="PRINTS" id="PR00052">
    <property type="entry name" value="FIBRILLARIN"/>
</dbReference>
<dbReference type="SMART" id="SM01206">
    <property type="entry name" value="Fibrillarin"/>
    <property type="match status" value="1"/>
</dbReference>
<dbReference type="SUPFAM" id="SSF53335">
    <property type="entry name" value="S-adenosyl-L-methionine-dependent methyltransferases"/>
    <property type="match status" value="1"/>
</dbReference>
<dbReference type="PROSITE" id="PS00566">
    <property type="entry name" value="FIBRILLARIN"/>
    <property type="match status" value="1"/>
</dbReference>
<name>FLPA_METKA</name>
<gene>
    <name evidence="1" type="primary">flpA</name>
    <name type="ordered locus">MK0560</name>
</gene>